<name>GPD_COLGL</name>
<keyword id="KW-0520">NAD</keyword>
<keyword id="KW-0560">Oxidoreductase</keyword>
<dbReference type="EC" id="1.1.1.8"/>
<dbReference type="EMBL" id="AY331190">
    <property type="protein sequence ID" value="AAP94992.1"/>
    <property type="molecule type" value="mRNA"/>
</dbReference>
<dbReference type="SMR" id="Q7Z8E7"/>
<dbReference type="GO" id="GO:0005829">
    <property type="term" value="C:cytosol"/>
    <property type="evidence" value="ECO:0007669"/>
    <property type="project" value="TreeGrafter"/>
</dbReference>
<dbReference type="GO" id="GO:0005634">
    <property type="term" value="C:nucleus"/>
    <property type="evidence" value="ECO:0007669"/>
    <property type="project" value="TreeGrafter"/>
</dbReference>
<dbReference type="GO" id="GO:0141152">
    <property type="term" value="F:glycerol-3-phosphate dehydrogenase (NAD+) activity"/>
    <property type="evidence" value="ECO:0007669"/>
    <property type="project" value="UniProtKB-EC"/>
</dbReference>
<dbReference type="GO" id="GO:0051287">
    <property type="term" value="F:NAD binding"/>
    <property type="evidence" value="ECO:0007669"/>
    <property type="project" value="InterPro"/>
</dbReference>
<dbReference type="GO" id="GO:0005975">
    <property type="term" value="P:carbohydrate metabolic process"/>
    <property type="evidence" value="ECO:0007669"/>
    <property type="project" value="InterPro"/>
</dbReference>
<dbReference type="GO" id="GO:0046168">
    <property type="term" value="P:glycerol-3-phosphate catabolic process"/>
    <property type="evidence" value="ECO:0007669"/>
    <property type="project" value="InterPro"/>
</dbReference>
<dbReference type="FunFam" id="1.10.1040.10:FF:000004">
    <property type="entry name" value="Glycerol-3-phosphate dehydrogenase [NAD(+)]"/>
    <property type="match status" value="1"/>
</dbReference>
<dbReference type="Gene3D" id="1.10.1040.10">
    <property type="entry name" value="N-(1-d-carboxylethyl)-l-norvaline Dehydrogenase, domain 2"/>
    <property type="match status" value="1"/>
</dbReference>
<dbReference type="Gene3D" id="3.40.50.720">
    <property type="entry name" value="NAD(P)-binding Rossmann-like Domain"/>
    <property type="match status" value="1"/>
</dbReference>
<dbReference type="InterPro" id="IPR008927">
    <property type="entry name" value="6-PGluconate_DH-like_C_sf"/>
</dbReference>
<dbReference type="InterPro" id="IPR013328">
    <property type="entry name" value="6PGD_dom2"/>
</dbReference>
<dbReference type="InterPro" id="IPR006168">
    <property type="entry name" value="G3P_DH_NAD-dep"/>
</dbReference>
<dbReference type="InterPro" id="IPR006109">
    <property type="entry name" value="G3P_DH_NAD-dep_C"/>
</dbReference>
<dbReference type="InterPro" id="IPR011128">
    <property type="entry name" value="G3P_DH_NAD-dep_N"/>
</dbReference>
<dbReference type="InterPro" id="IPR036291">
    <property type="entry name" value="NAD(P)-bd_dom_sf"/>
</dbReference>
<dbReference type="PANTHER" id="PTHR11728">
    <property type="entry name" value="GLYCEROL-3-PHOSPHATE DEHYDROGENASE"/>
    <property type="match status" value="1"/>
</dbReference>
<dbReference type="PANTHER" id="PTHR11728:SF8">
    <property type="entry name" value="GLYCEROL-3-PHOSPHATE DEHYDROGENASE [NAD(+)]-RELATED"/>
    <property type="match status" value="1"/>
</dbReference>
<dbReference type="Pfam" id="PF07479">
    <property type="entry name" value="NAD_Gly3P_dh_C"/>
    <property type="match status" value="1"/>
</dbReference>
<dbReference type="Pfam" id="PF01210">
    <property type="entry name" value="NAD_Gly3P_dh_N"/>
    <property type="match status" value="1"/>
</dbReference>
<dbReference type="PRINTS" id="PR00077">
    <property type="entry name" value="GPDHDRGNASE"/>
</dbReference>
<dbReference type="SUPFAM" id="SSF48179">
    <property type="entry name" value="6-phosphogluconate dehydrogenase C-terminal domain-like"/>
    <property type="match status" value="1"/>
</dbReference>
<dbReference type="SUPFAM" id="SSF51735">
    <property type="entry name" value="NAD(P)-binding Rossmann-fold domains"/>
    <property type="match status" value="1"/>
</dbReference>
<dbReference type="PROSITE" id="PS00957">
    <property type="entry name" value="NAD_G3PDH"/>
    <property type="match status" value="1"/>
</dbReference>
<protein>
    <recommendedName>
        <fullName>Glycerol-3-phosphate dehydrogenase [NAD(+)]</fullName>
        <ecNumber>1.1.1.8</ecNumber>
    </recommendedName>
</protein>
<sequence>MASLGADKKHKVTVVGSGNWGSTICKIVAENTKANPDLFEEAVHMWVFEEDVVIDKSSPYYDPAVGDAPQKLTGVINKYHENTKYLPGIKLPDNIIANPSLQDAVKDSTILVFNLPHQFIGNVCKQLRGHIMPFARGISCIKGVNVSDDGISLFSEWIGDGLGIYCGALSGANIASEIAAEKWSETTIAYDPPPMDNSRAPTPRSNSPANGNGIAPLTPVEMQHKDARGRTSKTKLTPVPAEYPPLDHQIFKQLFHRPYFHVRMVSDVAGVSLGGALKNIVALAAGFVDGRGWGDNAKAAIMRVGLLEMVNFGKEFFGQTVHTGTFTEESAGVADLITSCSGGRNFRCAKMAVAEGLSVEEIEKRELNGQLLQGTSTAKEVNSFLKARGLEKDYPLFTAVHGILEGRHSVDDIPSLVSDS</sequence>
<feature type="chain" id="PRO_0000138089" description="Glycerol-3-phosphate dehydrogenase [NAD(+)]">
    <location>
        <begin position="1"/>
        <end position="420"/>
    </location>
</feature>
<feature type="region of interest" description="Disordered" evidence="2">
    <location>
        <begin position="190"/>
        <end position="217"/>
    </location>
</feature>
<feature type="compositionally biased region" description="Polar residues" evidence="2">
    <location>
        <begin position="199"/>
        <end position="210"/>
    </location>
</feature>
<feature type="active site" description="Proton acceptor" evidence="1">
    <location>
        <position position="278"/>
    </location>
</feature>
<feature type="binding site" evidence="1">
    <location>
        <begin position="16"/>
        <end position="21"/>
    </location>
    <ligand>
        <name>NAD(+)</name>
        <dbReference type="ChEBI" id="CHEBI:57540"/>
    </ligand>
</feature>
<feature type="binding site" evidence="1">
    <location>
        <position position="48"/>
    </location>
    <ligand>
        <name>NAD(+)</name>
        <dbReference type="ChEBI" id="CHEBI:57540"/>
    </ligand>
</feature>
<feature type="binding site" evidence="1">
    <location>
        <position position="119"/>
    </location>
    <ligand>
        <name>NAD(+)</name>
        <dbReference type="ChEBI" id="CHEBI:57540"/>
    </ligand>
</feature>
<feature type="binding site" evidence="1">
    <location>
        <position position="142"/>
    </location>
    <ligand>
        <name>substrate</name>
    </ligand>
</feature>
<feature type="binding site" evidence="1">
    <location>
        <position position="175"/>
    </location>
    <ligand>
        <name>NAD(+)</name>
        <dbReference type="ChEBI" id="CHEBI:57540"/>
    </ligand>
</feature>
<feature type="binding site" evidence="1">
    <location>
        <begin position="344"/>
        <end position="345"/>
    </location>
    <ligand>
        <name>substrate</name>
    </ligand>
</feature>
<feature type="binding site" evidence="1">
    <location>
        <position position="344"/>
    </location>
    <ligand>
        <name>NAD(+)</name>
        <dbReference type="ChEBI" id="CHEBI:57540"/>
    </ligand>
</feature>
<feature type="binding site" evidence="1">
    <location>
        <position position="373"/>
    </location>
    <ligand>
        <name>NAD(+)</name>
        <dbReference type="ChEBI" id="CHEBI:57540"/>
    </ligand>
</feature>
<organism>
    <name type="scientific">Colletotrichum gloeosporioides</name>
    <name type="common">Anthracnose fungus</name>
    <name type="synonym">Glomerella cingulata</name>
    <dbReference type="NCBI Taxonomy" id="474922"/>
    <lineage>
        <taxon>Eukaryota</taxon>
        <taxon>Fungi</taxon>
        <taxon>Dikarya</taxon>
        <taxon>Ascomycota</taxon>
        <taxon>Pezizomycotina</taxon>
        <taxon>Sordariomycetes</taxon>
        <taxon>Hypocreomycetidae</taxon>
        <taxon>Glomerellales</taxon>
        <taxon>Glomerellaceae</taxon>
        <taxon>Colletotrichum</taxon>
        <taxon>Colletotrichum gloeosporioides species complex</taxon>
    </lineage>
</organism>
<reference key="1">
    <citation type="journal article" date="2004" name="J. Biol. Chem.">
        <title>Targeted gene disruption of glycerol-3-phosphate dehydrogenase in Colletotrichum gloeosporioides reveals evidence that glycerol is a significant transferred nutrient from host plant to fungal pathogen.</title>
        <authorList>
            <person name="Wei Y."/>
            <person name="Shen W."/>
            <person name="Dauk M."/>
            <person name="Wang F."/>
            <person name="Selvaraj G."/>
            <person name="Zou J."/>
        </authorList>
    </citation>
    <scope>NUCLEOTIDE SEQUENCE [GENOMIC DNA]</scope>
</reference>
<comment type="catalytic activity">
    <reaction>
        <text>sn-glycerol 3-phosphate + NAD(+) = dihydroxyacetone phosphate + NADH + H(+)</text>
        <dbReference type="Rhea" id="RHEA:11092"/>
        <dbReference type="ChEBI" id="CHEBI:15378"/>
        <dbReference type="ChEBI" id="CHEBI:57540"/>
        <dbReference type="ChEBI" id="CHEBI:57597"/>
        <dbReference type="ChEBI" id="CHEBI:57642"/>
        <dbReference type="ChEBI" id="CHEBI:57945"/>
        <dbReference type="EC" id="1.1.1.8"/>
    </reaction>
</comment>
<comment type="similarity">
    <text evidence="3">Belongs to the NAD-dependent glycerol-3-phosphate dehydrogenase family.</text>
</comment>
<evidence type="ECO:0000250" key="1">
    <source>
        <dbReference type="UniProtKB" id="P21695"/>
    </source>
</evidence>
<evidence type="ECO:0000256" key="2">
    <source>
        <dbReference type="SAM" id="MobiDB-lite"/>
    </source>
</evidence>
<evidence type="ECO:0000305" key="3"/>
<proteinExistence type="evidence at transcript level"/>
<accession>Q7Z8E7</accession>